<evidence type="ECO:0000255" key="1">
    <source>
        <dbReference type="HAMAP-Rule" id="MF_02011"/>
    </source>
</evidence>
<feature type="chain" id="PRO_0000337916" description="Cell cycle protein GpsB">
    <location>
        <begin position="1"/>
        <end position="112"/>
    </location>
</feature>
<feature type="coiled-coil region" evidence="1">
    <location>
        <begin position="38"/>
        <end position="72"/>
    </location>
</feature>
<gene>
    <name evidence="1" type="primary">gpsB</name>
    <name type="ordered locus">BT9727_1439</name>
</gene>
<comment type="function">
    <text evidence="1">Divisome component that associates with the complex late in its assembly, after the Z-ring is formed, and is dependent on DivIC and PBP2B for its recruitment to the divisome. Together with EzrA, is a key component of the system that regulates PBP1 localization during cell cycle progression. Its main role could be the removal of PBP1 from the cell pole after pole maturation is completed. Also contributes to the recruitment of PBP1 to the division complex. Not essential for septum formation.</text>
</comment>
<comment type="subunit">
    <text evidence="1">Forms polymers through the coiled coil domains. Interacts with PBP1, MreC and EzrA.</text>
</comment>
<comment type="subcellular location">
    <subcellularLocation>
        <location evidence="1">Cytoplasm</location>
    </subcellularLocation>
    <text evidence="1">Shuttles between the lateral wall and the division site in a cell cycle-dependent manner.</text>
</comment>
<comment type="similarity">
    <text evidence="1">Belongs to the GpsB family.</text>
</comment>
<reference key="1">
    <citation type="journal article" date="2006" name="J. Bacteriol.">
        <title>Pathogenomic sequence analysis of Bacillus cereus and Bacillus thuringiensis isolates closely related to Bacillus anthracis.</title>
        <authorList>
            <person name="Han C.S."/>
            <person name="Xie G."/>
            <person name="Challacombe J.F."/>
            <person name="Altherr M.R."/>
            <person name="Bhotika S.S."/>
            <person name="Bruce D."/>
            <person name="Campbell C.S."/>
            <person name="Campbell M.L."/>
            <person name="Chen J."/>
            <person name="Chertkov O."/>
            <person name="Cleland C."/>
            <person name="Dimitrijevic M."/>
            <person name="Doggett N.A."/>
            <person name="Fawcett J.J."/>
            <person name="Glavina T."/>
            <person name="Goodwin L.A."/>
            <person name="Hill K.K."/>
            <person name="Hitchcock P."/>
            <person name="Jackson P.J."/>
            <person name="Keim P."/>
            <person name="Kewalramani A.R."/>
            <person name="Longmire J."/>
            <person name="Lucas S."/>
            <person name="Malfatti S."/>
            <person name="McMurry K."/>
            <person name="Meincke L.J."/>
            <person name="Misra M."/>
            <person name="Moseman B.L."/>
            <person name="Mundt M."/>
            <person name="Munk A.C."/>
            <person name="Okinaka R.T."/>
            <person name="Parson-Quintana B."/>
            <person name="Reilly L.P."/>
            <person name="Richardson P."/>
            <person name="Robinson D.L."/>
            <person name="Rubin E."/>
            <person name="Saunders E."/>
            <person name="Tapia R."/>
            <person name="Tesmer J.G."/>
            <person name="Thayer N."/>
            <person name="Thompson L.S."/>
            <person name="Tice H."/>
            <person name="Ticknor L.O."/>
            <person name="Wills P.L."/>
            <person name="Brettin T.S."/>
            <person name="Gilna P."/>
        </authorList>
    </citation>
    <scope>NUCLEOTIDE SEQUENCE [LARGE SCALE GENOMIC DNA]</scope>
    <source>
        <strain>97-27</strain>
    </source>
</reference>
<dbReference type="EMBL" id="AE017355">
    <property type="protein sequence ID" value="AAT59466.1"/>
    <property type="molecule type" value="Genomic_DNA"/>
</dbReference>
<dbReference type="RefSeq" id="WP_000622430.1">
    <property type="nucleotide sequence ID" value="NC_005957.1"/>
</dbReference>
<dbReference type="RefSeq" id="YP_035773.1">
    <property type="nucleotide sequence ID" value="NC_005957.1"/>
</dbReference>
<dbReference type="SMR" id="Q6HKZ8"/>
<dbReference type="GeneID" id="93009481"/>
<dbReference type="KEGG" id="btk:BT9727_1439"/>
<dbReference type="PATRIC" id="fig|281309.8.peg.1513"/>
<dbReference type="HOGENOM" id="CLU_140309_1_0_9"/>
<dbReference type="Proteomes" id="UP000001301">
    <property type="component" value="Chromosome"/>
</dbReference>
<dbReference type="GO" id="GO:0005737">
    <property type="term" value="C:cytoplasm"/>
    <property type="evidence" value="ECO:0007669"/>
    <property type="project" value="UniProtKB-SubCell"/>
</dbReference>
<dbReference type="GO" id="GO:0051301">
    <property type="term" value="P:cell division"/>
    <property type="evidence" value="ECO:0007669"/>
    <property type="project" value="UniProtKB-UniRule"/>
</dbReference>
<dbReference type="GO" id="GO:0008360">
    <property type="term" value="P:regulation of cell shape"/>
    <property type="evidence" value="ECO:0007669"/>
    <property type="project" value="UniProtKB-UniRule"/>
</dbReference>
<dbReference type="Gene3D" id="6.10.250.660">
    <property type="match status" value="1"/>
</dbReference>
<dbReference type="HAMAP" id="MF_02011">
    <property type="entry name" value="GpsB"/>
    <property type="match status" value="1"/>
</dbReference>
<dbReference type="InterPro" id="IPR011229">
    <property type="entry name" value="Cell_cycle_GpsB"/>
</dbReference>
<dbReference type="InterPro" id="IPR019933">
    <property type="entry name" value="DivIVA_domain"/>
</dbReference>
<dbReference type="InterPro" id="IPR007793">
    <property type="entry name" value="DivIVA_fam"/>
</dbReference>
<dbReference type="NCBIfam" id="TIGR03544">
    <property type="entry name" value="DivI1A_domain"/>
    <property type="match status" value="1"/>
</dbReference>
<dbReference type="NCBIfam" id="NF010725">
    <property type="entry name" value="PRK14127.1"/>
    <property type="match status" value="1"/>
</dbReference>
<dbReference type="PANTHER" id="PTHR35794:SF1">
    <property type="entry name" value="CELL CYCLE PROTEIN GPSB"/>
    <property type="match status" value="1"/>
</dbReference>
<dbReference type="PANTHER" id="PTHR35794">
    <property type="entry name" value="CELL DIVISION PROTEIN DIVIVA"/>
    <property type="match status" value="1"/>
</dbReference>
<dbReference type="Pfam" id="PF05103">
    <property type="entry name" value="DivIVA"/>
    <property type="match status" value="1"/>
</dbReference>
<dbReference type="PIRSF" id="PIRSF029938">
    <property type="entry name" value="UCP029938"/>
    <property type="match status" value="1"/>
</dbReference>
<protein>
    <recommendedName>
        <fullName evidence="1">Cell cycle protein GpsB</fullName>
    </recommendedName>
    <alternativeName>
        <fullName evidence="1">Guiding PBP1-shuttling protein</fullName>
    </alternativeName>
</protein>
<keyword id="KW-0131">Cell cycle</keyword>
<keyword id="KW-0132">Cell division</keyword>
<keyword id="KW-0133">Cell shape</keyword>
<keyword id="KW-0175">Coiled coil</keyword>
<keyword id="KW-0963">Cytoplasm</keyword>
<sequence length="112" mass="13119">MISDKIKLTAKDILEKEFKTGMRGYQQEEVDKFLDMIIKDYEAFHKEFEQLKQQNARLKRELEEQKLAATQVPQQPVVQTPVAQPVYNNTNTDILKRLSNLEKAVFGSKLYE</sequence>
<organism>
    <name type="scientific">Bacillus thuringiensis subsp. konkukian (strain 97-27)</name>
    <dbReference type="NCBI Taxonomy" id="281309"/>
    <lineage>
        <taxon>Bacteria</taxon>
        <taxon>Bacillati</taxon>
        <taxon>Bacillota</taxon>
        <taxon>Bacilli</taxon>
        <taxon>Bacillales</taxon>
        <taxon>Bacillaceae</taxon>
        <taxon>Bacillus</taxon>
        <taxon>Bacillus cereus group</taxon>
    </lineage>
</organism>
<accession>Q6HKZ8</accession>
<proteinExistence type="inferred from homology"/>
<name>GPSB_BACHK</name>